<proteinExistence type="evidence at protein level"/>
<reference key="1">
    <citation type="journal article" date="2009" name="PLoS ONE">
        <title>Non mycobacterial virulence genes in the genome of the emerging pathogen Mycobacterium abscessus.</title>
        <authorList>
            <person name="Ripoll F."/>
            <person name="Pasek S."/>
            <person name="Schenowitz C."/>
            <person name="Dossat C."/>
            <person name="Barbe V."/>
            <person name="Rottman M."/>
            <person name="Macheras E."/>
            <person name="Heym B."/>
            <person name="Herrmann J.L."/>
            <person name="Daffe M."/>
            <person name="Brosch R."/>
            <person name="Risler J.L."/>
            <person name="Gaillard J.L."/>
        </authorList>
    </citation>
    <scope>NUCLEOTIDE SEQUENCE [LARGE SCALE GENOMIC DNA]</scope>
    <source>
        <strain>ATCC 19977 / DSM 44196 / CCUG 20993 / CIP 104536 / JCM 13569 / NCTC 13031 / TMC 1543 / L948</strain>
    </source>
</reference>
<reference key="2">
    <citation type="journal article" date="2017" name="Front. Microbiol.">
        <title>Mycobacterium abscessus subsp. abscessus Is Capable of Degrading Pseudomonas aeruginosa Quinolone Signals.</title>
        <authorList>
            <person name="Birmes F.S."/>
            <person name="Wolf T."/>
            <person name="Kohl T.A."/>
            <person name="Rueger K."/>
            <person name="Bange F."/>
            <person name="Kalinowski J."/>
            <person name="Fetzner S."/>
        </authorList>
    </citation>
    <scope>FUNCTION</scope>
    <scope>CATALYTIC ACTIVITY</scope>
    <scope>BIOPHYSICOCHEMICAL PROPERTIES</scope>
    <scope>INDUCTION</scope>
    <source>
        <strain>ATCC 19977 / DSM 44196 / CCUG 20993 / CIP 104536 / JCM 13569 / NCTC 13031 / TMC 1543 / L948</strain>
    </source>
</reference>
<reference key="3">
    <citation type="journal article" date="2019" name="J. Struct. Biol.">
        <title>Structural basis for recognition and ring-cleavage of the Pseudomonas quinolone signal (PQS) by AqdC, a mycobacterial dioxygenase of the alpha/beta-hydrolase fold family.</title>
        <authorList>
            <person name="Wullich S.C."/>
            <person name="Kobus S."/>
            <person name="Wienhold M."/>
            <person name="Hennecke U."/>
            <person name="Smits S.H.J."/>
            <person name="Fetzner S."/>
        </authorList>
    </citation>
    <scope>X-RAY CRYSTALLOGRAPHY (2.0 ANGSTROMS) OF WILD-TYPE APOENZYME AND IN COMPLEX WITH N-OCTANOYLANTHRANILIC ACID AND MUTANT SER-96/ALA-246 IN COMPLEX WITH PQS</scope>
    <scope>FUNCTION</scope>
    <scope>CATALYTIC ACTIVITY</scope>
    <scope>SUBSTRATE SPECIFICITY</scope>
    <scope>REACTION MECHANISM</scope>
    <scope>ACTIVE SITE</scope>
    <scope>MUTAGENESIS OF ALA-96 AND HIS-246</scope>
    <scope>SUBUNIT</scope>
    <source>
        <strain>ATCC 19977 / DSM 44196 / CCUG 20993 / CIP 104536 / JCM 13569 / NCTC 13031 / TMC 1543 / L948</strain>
    </source>
</reference>
<sequence>MITTKTVNGVQIAFDDQGHEPGPVFVTLSGWAHDLRAYDGMLPYLRAAQRTVRVCWRGHGPDRNLVGDFGIDEMAADTIGLLDALEVDSFVPIAHAHGGWAALEIADRLGAQRVPAVMILDLIMTPAPREFVAALHGIQDPERWKEGRDGLVQSWLAGTTNQAVLDHVRYDSGGHGFDMWARAGRVIDEAYRTWGSPMRRMEALAEPCAIRHVFSHPKIGEYDALHDDFAARHPWFSYRRLGGETHFPGIELPQQVAAEAIDLLAGARI</sequence>
<comment type="function">
    <text evidence="1 2">Ring-cleaving dioxygenase involved in the degradation pathway of the Pseudomonas aeruginosa quorum sensing signal molecules HHQ (2-heptyl-4-quinolone) and PQS (2-heptyl-3-hydroxy-4(1H)-quinolone) to anthranilate. Catalyzes the cleavage of PQS to form N-octanoylanthranilate and carbon monoxide. Thus, leads to the inactivation of PQS that plays a central role in the regulation of virulence factor production by P.aeruginosa, thereby quenching the production of antimicrobials, which may contribute to the competitiveness of M.abscessus in presence of P.aeruginosa (PubMed:28303132, PubMed:31228546). In vitro, can also use other 2-alkyl-3-hydroxy-4(1H)-quinolone (AHQ) substrates with shorter alkyl substituents at C2, but with lower efficiency (PubMed:31228546).</text>
</comment>
<comment type="catalytic activity">
    <reaction evidence="1 2">
        <text>2-heptyl-3-hydroxy-4(1H)-quinolone + O2 = N-octanoylanthranilate + CO + H(+)</text>
        <dbReference type="Rhea" id="RHEA:60352"/>
        <dbReference type="ChEBI" id="CHEBI:15378"/>
        <dbReference type="ChEBI" id="CHEBI:15379"/>
        <dbReference type="ChEBI" id="CHEBI:17245"/>
        <dbReference type="ChEBI" id="CHEBI:29472"/>
        <dbReference type="ChEBI" id="CHEBI:143722"/>
    </reaction>
    <physiologicalReaction direction="left-to-right" evidence="1 7">
        <dbReference type="Rhea" id="RHEA:60353"/>
    </physiologicalReaction>
</comment>
<comment type="biophysicochemical properties">
    <kinetics>
        <KM evidence="1">37.2 uM for 2-heptyl-3-hydroxy-4(1H)-quinolone</KM>
        <KM evidence="2">5.8 uM for 2-heptyl-3-hydroxy-4(1H)-quinolone</KM>
        <KM evidence="2">21 uM for 2-butyl-3-hydroxy-4(1H)-quinolone</KM>
        <KM evidence="2">963.8 uM for 2-methyl-3-hydroxy-4(1H)-quinolone</KM>
        <text evidence="1 2">kcat is 97.8 sec(-1) with 2-heptyl-3-hydroxy-4(1H)-quinolone as substrate (PubMed:28303132). kcat is 41.9 sec(-1) with 2-heptyl-3-hydroxy-4(1H)-quinolone as substrate. kcat is 18.3 sec(-1) with 2-butyl-3-hydroxy-4(1H)-quinolone as substrate. kcat is 1.63 sec(-1) with 2-methyl-3-hydroxy-4(1H)-quinolone as substrate (PubMed:31228546).</text>
    </kinetics>
</comment>
<comment type="subunit">
    <text evidence="2">Monomer.</text>
</comment>
<comment type="induction">
    <text evidence="1">Up-regulated by PQS.</text>
</comment>
<comment type="similarity">
    <text evidence="5">Belongs to the AB hydrolase superfamily.</text>
</comment>
<dbReference type="EC" id="1.13.11.-" evidence="1 2"/>
<dbReference type="EMBL" id="CU458896">
    <property type="protein sequence ID" value="CAM60402.1"/>
    <property type="molecule type" value="Genomic_DNA"/>
</dbReference>
<dbReference type="RefSeq" id="WP_005112966.1">
    <property type="nucleotide sequence ID" value="NZ_MLCG01000005.1"/>
</dbReference>
<dbReference type="PDB" id="6RA2">
    <property type="method" value="X-ray"/>
    <property type="resolution" value="2.30 A"/>
    <property type="chains" value="A/E/F=1-269"/>
</dbReference>
<dbReference type="PDB" id="6RA3">
    <property type="method" value="X-ray"/>
    <property type="resolution" value="2.00 A"/>
    <property type="chains" value="A/E/F=1-269"/>
</dbReference>
<dbReference type="PDB" id="6RB3">
    <property type="method" value="X-ray"/>
    <property type="resolution" value="2.30 A"/>
    <property type="chains" value="A/B/E=1-269"/>
</dbReference>
<dbReference type="PDBsum" id="6RA2"/>
<dbReference type="PDBsum" id="6RA3"/>
<dbReference type="PDBsum" id="6RB3"/>
<dbReference type="SMR" id="B1MFK2"/>
<dbReference type="ESTHER" id="mycab-x8en65">
    <property type="family name" value="HOD-cofactorfree-dioxygenase"/>
</dbReference>
<dbReference type="GeneID" id="93377246"/>
<dbReference type="KEGG" id="mab:MAB_0303"/>
<dbReference type="SABIO-RK" id="B1MFK2"/>
<dbReference type="Proteomes" id="UP000007137">
    <property type="component" value="Chromosome"/>
</dbReference>
<dbReference type="GO" id="GO:0051213">
    <property type="term" value="F:dioxygenase activity"/>
    <property type="evidence" value="ECO:0007669"/>
    <property type="project" value="UniProtKB-KW"/>
</dbReference>
<dbReference type="Gene3D" id="1.10.210.20">
    <property type="match status" value="1"/>
</dbReference>
<dbReference type="Gene3D" id="3.40.50.1820">
    <property type="entry name" value="alpha/beta hydrolase"/>
    <property type="match status" value="1"/>
</dbReference>
<dbReference type="InterPro" id="IPR000073">
    <property type="entry name" value="AB_hydrolase_1"/>
</dbReference>
<dbReference type="InterPro" id="IPR029058">
    <property type="entry name" value="AB_hydrolase_fold"/>
</dbReference>
<dbReference type="Pfam" id="PF00561">
    <property type="entry name" value="Abhydrolase_1"/>
    <property type="match status" value="1"/>
</dbReference>
<dbReference type="SUPFAM" id="SSF53474">
    <property type="entry name" value="alpha/beta-Hydrolases"/>
    <property type="match status" value="1"/>
</dbReference>
<organism>
    <name type="scientific">Mycobacteroides abscessus (strain ATCC 19977 / DSM 44196 / CCUG 20993 / CIP 104536 / JCM 13569 / NCTC 13031 / TMC 1543 / L948)</name>
    <name type="common">Mycobacterium abscessus</name>
    <dbReference type="NCBI Taxonomy" id="561007"/>
    <lineage>
        <taxon>Bacteria</taxon>
        <taxon>Bacillati</taxon>
        <taxon>Actinomycetota</taxon>
        <taxon>Actinomycetes</taxon>
        <taxon>Mycobacteriales</taxon>
        <taxon>Mycobacteriaceae</taxon>
        <taxon>Mycobacteroides</taxon>
        <taxon>Mycobacteroides abscessus</taxon>
    </lineage>
</organism>
<gene>
    <name evidence="3 4" type="primary">aqdC</name>
    <name evidence="8" type="ordered locus">MAB_0303</name>
</gene>
<name>AQDC_MYCA9</name>
<feature type="chain" id="PRO_0000448002" description="2-heptyl-3-hydroxy-4(1H)-quinolone dioxygenase">
    <location>
        <begin position="1"/>
        <end position="269"/>
    </location>
</feature>
<feature type="active site" description="Proton donor/acceptor" evidence="7">
    <location>
        <position position="246"/>
    </location>
</feature>
<feature type="binding site" evidence="2">
    <location>
        <position position="97"/>
    </location>
    <ligand>
        <name>substrate</name>
    </ligand>
</feature>
<feature type="site" description="Increases basicity of active site His" evidence="7">
    <location>
        <position position="121"/>
    </location>
</feature>
<feature type="mutagenesis site" description="Increases substrate affinity." evidence="2">
    <original>A</original>
    <variation>S</variation>
    <location>
        <position position="96"/>
    </location>
</feature>
<feature type="mutagenesis site" description="Loss of catalytic activity." evidence="2">
    <original>H</original>
    <variation>A</variation>
    <location>
        <position position="246"/>
    </location>
</feature>
<feature type="strand" evidence="9">
    <location>
        <begin position="3"/>
        <end position="7"/>
    </location>
</feature>
<feature type="strand" evidence="9">
    <location>
        <begin position="10"/>
        <end position="17"/>
    </location>
</feature>
<feature type="strand" evidence="9">
    <location>
        <begin position="24"/>
        <end position="28"/>
    </location>
</feature>
<feature type="helix" evidence="9">
    <location>
        <begin position="35"/>
        <end position="38"/>
    </location>
</feature>
<feature type="turn" evidence="9">
    <location>
        <begin position="39"/>
        <end position="41"/>
    </location>
</feature>
<feature type="helix" evidence="9">
    <location>
        <begin position="42"/>
        <end position="48"/>
    </location>
</feature>
<feature type="strand" evidence="9">
    <location>
        <begin position="51"/>
        <end position="54"/>
    </location>
</feature>
<feature type="strand" evidence="9">
    <location>
        <begin position="60"/>
        <end position="62"/>
    </location>
</feature>
<feature type="helix" evidence="9">
    <location>
        <begin position="71"/>
        <end position="84"/>
    </location>
</feature>
<feature type="strand" evidence="9">
    <location>
        <begin position="89"/>
        <end position="95"/>
    </location>
</feature>
<feature type="helix" evidence="9">
    <location>
        <begin position="98"/>
        <end position="109"/>
    </location>
</feature>
<feature type="turn" evidence="9">
    <location>
        <begin position="111"/>
        <end position="113"/>
    </location>
</feature>
<feature type="strand" evidence="9">
    <location>
        <begin position="116"/>
        <end position="121"/>
    </location>
</feature>
<feature type="helix" evidence="9">
    <location>
        <begin position="129"/>
        <end position="137"/>
    </location>
</feature>
<feature type="turn" evidence="9">
    <location>
        <begin position="141"/>
        <end position="143"/>
    </location>
</feature>
<feature type="helix" evidence="9">
    <location>
        <begin position="144"/>
        <end position="156"/>
    </location>
</feature>
<feature type="helix" evidence="9">
    <location>
        <begin position="162"/>
        <end position="170"/>
    </location>
</feature>
<feature type="helix" evidence="9">
    <location>
        <begin position="177"/>
        <end position="194"/>
    </location>
</feature>
<feature type="helix" evidence="9">
    <location>
        <begin position="197"/>
        <end position="202"/>
    </location>
</feature>
<feature type="strand" evidence="9">
    <location>
        <begin position="209"/>
        <end position="215"/>
    </location>
</feature>
<feature type="helix" evidence="9">
    <location>
        <begin position="223"/>
        <end position="232"/>
    </location>
</feature>
<feature type="strand" evidence="9">
    <location>
        <begin position="236"/>
        <end position="240"/>
    </location>
</feature>
<feature type="strand" evidence="9">
    <location>
        <begin position="244"/>
        <end position="246"/>
    </location>
</feature>
<feature type="helix" evidence="9">
    <location>
        <begin position="248"/>
        <end position="251"/>
    </location>
</feature>
<feature type="helix" evidence="9">
    <location>
        <begin position="253"/>
        <end position="266"/>
    </location>
</feature>
<protein>
    <recommendedName>
        <fullName evidence="6 7">2-heptyl-3-hydroxy-4(1H)-quinolone dioxygenase</fullName>
        <shortName evidence="6 7">PQS dioxygenase</shortName>
        <ecNumber evidence="1 2">1.13.11.-</ecNumber>
    </recommendedName>
</protein>
<keyword id="KW-0002">3D-structure</keyword>
<keyword id="KW-0223">Dioxygenase</keyword>
<keyword id="KW-0560">Oxidoreductase</keyword>
<keyword id="KW-1185">Reference proteome</keyword>
<accession>B1MFK2</accession>
<evidence type="ECO:0000269" key="1">
    <source>
    </source>
</evidence>
<evidence type="ECO:0000269" key="2">
    <source>
    </source>
</evidence>
<evidence type="ECO:0000303" key="3">
    <source>
    </source>
</evidence>
<evidence type="ECO:0000303" key="4">
    <source>
    </source>
</evidence>
<evidence type="ECO:0000305" key="5"/>
<evidence type="ECO:0000305" key="6">
    <source>
    </source>
</evidence>
<evidence type="ECO:0000305" key="7">
    <source>
    </source>
</evidence>
<evidence type="ECO:0000312" key="8">
    <source>
        <dbReference type="EMBL" id="CAM60402.1"/>
    </source>
</evidence>
<evidence type="ECO:0007829" key="9">
    <source>
        <dbReference type="PDB" id="6RA2"/>
    </source>
</evidence>